<name>RR15_CARPA</name>
<accession>B1A991</accession>
<dbReference type="EMBL" id="EU431223">
    <property type="protein sequence ID" value="ABY86830.1"/>
    <property type="molecule type" value="Genomic_DNA"/>
</dbReference>
<dbReference type="RefSeq" id="YP_001671739.1">
    <property type="nucleotide sequence ID" value="NC_010323.1"/>
</dbReference>
<dbReference type="SMR" id="B1A991"/>
<dbReference type="GeneID" id="5878404"/>
<dbReference type="KEGG" id="cpap:5878404"/>
<dbReference type="OrthoDB" id="441444at2759"/>
<dbReference type="GO" id="GO:0009507">
    <property type="term" value="C:chloroplast"/>
    <property type="evidence" value="ECO:0007669"/>
    <property type="project" value="UniProtKB-SubCell"/>
</dbReference>
<dbReference type="GO" id="GO:1990904">
    <property type="term" value="C:ribonucleoprotein complex"/>
    <property type="evidence" value="ECO:0007669"/>
    <property type="project" value="UniProtKB-KW"/>
</dbReference>
<dbReference type="GO" id="GO:0005840">
    <property type="term" value="C:ribosome"/>
    <property type="evidence" value="ECO:0007669"/>
    <property type="project" value="UniProtKB-KW"/>
</dbReference>
<dbReference type="GO" id="GO:0003735">
    <property type="term" value="F:structural constituent of ribosome"/>
    <property type="evidence" value="ECO:0007669"/>
    <property type="project" value="InterPro"/>
</dbReference>
<dbReference type="GO" id="GO:0006412">
    <property type="term" value="P:translation"/>
    <property type="evidence" value="ECO:0007669"/>
    <property type="project" value="UniProtKB-UniRule"/>
</dbReference>
<dbReference type="CDD" id="cd00353">
    <property type="entry name" value="Ribosomal_S15p_S13e"/>
    <property type="match status" value="1"/>
</dbReference>
<dbReference type="Gene3D" id="1.10.287.10">
    <property type="entry name" value="S15/NS1, RNA-binding"/>
    <property type="match status" value="1"/>
</dbReference>
<dbReference type="HAMAP" id="MF_01343_B">
    <property type="entry name" value="Ribosomal_uS15_B"/>
    <property type="match status" value="1"/>
</dbReference>
<dbReference type="InterPro" id="IPR000589">
    <property type="entry name" value="Ribosomal_uS15"/>
</dbReference>
<dbReference type="InterPro" id="IPR005290">
    <property type="entry name" value="Ribosomal_uS15_bac-type"/>
</dbReference>
<dbReference type="InterPro" id="IPR009068">
    <property type="entry name" value="uS15_NS1_RNA-bd_sf"/>
</dbReference>
<dbReference type="NCBIfam" id="TIGR00952">
    <property type="entry name" value="S15_bact"/>
    <property type="match status" value="1"/>
</dbReference>
<dbReference type="PANTHER" id="PTHR23321">
    <property type="entry name" value="RIBOSOMAL PROTEIN S15, BACTERIAL AND ORGANELLAR"/>
    <property type="match status" value="1"/>
</dbReference>
<dbReference type="PANTHER" id="PTHR23321:SF26">
    <property type="entry name" value="SMALL RIBOSOMAL SUBUNIT PROTEIN US15M"/>
    <property type="match status" value="1"/>
</dbReference>
<dbReference type="Pfam" id="PF00312">
    <property type="entry name" value="Ribosomal_S15"/>
    <property type="match status" value="1"/>
</dbReference>
<dbReference type="SMART" id="SM01387">
    <property type="entry name" value="Ribosomal_S15"/>
    <property type="match status" value="1"/>
</dbReference>
<dbReference type="SUPFAM" id="SSF47060">
    <property type="entry name" value="S15/NS1 RNA-binding domain"/>
    <property type="match status" value="1"/>
</dbReference>
<dbReference type="PROSITE" id="PS00362">
    <property type="entry name" value="RIBOSOMAL_S15"/>
    <property type="match status" value="1"/>
</dbReference>
<comment type="subunit">
    <text evidence="1">Part of the 30S ribosomal subunit.</text>
</comment>
<comment type="subcellular location">
    <subcellularLocation>
        <location>Plastid</location>
        <location>Chloroplast</location>
    </subcellularLocation>
</comment>
<comment type="similarity">
    <text evidence="2">Belongs to the universal ribosomal protein uS15 family.</text>
</comment>
<gene>
    <name type="primary">rps15</name>
</gene>
<keyword id="KW-0150">Chloroplast</keyword>
<keyword id="KW-0934">Plastid</keyword>
<keyword id="KW-0687">Ribonucleoprotein</keyword>
<keyword id="KW-0689">Ribosomal protein</keyword>
<feature type="chain" id="PRO_0000354242" description="Small ribosomal subunit protein uS15c">
    <location>
        <begin position="1"/>
        <end position="92"/>
    </location>
</feature>
<evidence type="ECO:0000250" key="1"/>
<evidence type="ECO:0000305" key="2"/>
<geneLocation type="chloroplast"/>
<reference key="1">
    <citation type="journal article" date="2008" name="Nature">
        <title>The draft genome of the transgenic tropical fruit tree papaya (Carica papaya Linnaeus).</title>
        <authorList>
            <person name="Ming R."/>
            <person name="Hou S."/>
            <person name="Feng Y."/>
            <person name="Yu Q."/>
            <person name="Dionne-Laporte A."/>
            <person name="Saw J.H."/>
            <person name="Senin P."/>
            <person name="Wang W."/>
            <person name="Ly B.V."/>
            <person name="Lewis K.L."/>
            <person name="Salzberg S.L."/>
            <person name="Feng L."/>
            <person name="Jones M.R."/>
            <person name="Skelton R.L."/>
            <person name="Murray J.E."/>
            <person name="Chen C."/>
            <person name="Qian W."/>
            <person name="Shen J."/>
            <person name="Du P."/>
            <person name="Eustice M."/>
            <person name="Tong E."/>
            <person name="Tang H."/>
            <person name="Lyons E."/>
            <person name="Paull R.E."/>
            <person name="Michael T.P."/>
            <person name="Wall K."/>
            <person name="Rice D.W."/>
            <person name="Albert H."/>
            <person name="Wang M.L."/>
            <person name="Zhu Y.J."/>
            <person name="Schatz M."/>
            <person name="Nagarajan N."/>
            <person name="Acob R.A."/>
            <person name="Guan P."/>
            <person name="Blas A."/>
            <person name="Wai C.M."/>
            <person name="Ackerman C.M."/>
            <person name="Ren Y."/>
            <person name="Liu C."/>
            <person name="Wang J."/>
            <person name="Wang J."/>
            <person name="Na J.K."/>
            <person name="Shakirov E.V."/>
            <person name="Haas B."/>
            <person name="Thimmapuram J."/>
            <person name="Nelson D."/>
            <person name="Wang X."/>
            <person name="Bowers J.E."/>
            <person name="Gschwend A.R."/>
            <person name="Delcher A.L."/>
            <person name="Singh R."/>
            <person name="Suzuki J.Y."/>
            <person name="Tripathi S."/>
            <person name="Neupane K."/>
            <person name="Wei H."/>
            <person name="Irikura B."/>
            <person name="Paidi M."/>
            <person name="Jiang N."/>
            <person name="Zhang W."/>
            <person name="Presting G."/>
            <person name="Windsor A."/>
            <person name="Navajas-Perez R."/>
            <person name="Torres M.J."/>
            <person name="Feltus F.A."/>
            <person name="Porter B."/>
            <person name="Li Y."/>
            <person name="Burroughs A.M."/>
            <person name="Luo M.C."/>
            <person name="Liu L."/>
            <person name="Christopher D.A."/>
            <person name="Mount S.M."/>
            <person name="Moore P.H."/>
            <person name="Sugimura T."/>
            <person name="Jiang J."/>
            <person name="Schuler M.A."/>
            <person name="Friedman V."/>
            <person name="Mitchell-Olds T."/>
            <person name="Shippen D.E."/>
            <person name="dePamphilis C.W."/>
            <person name="Palmer J.D."/>
            <person name="Freeling M."/>
            <person name="Paterson A.H."/>
            <person name="Gonsalves D."/>
            <person name="Wang L."/>
            <person name="Alam M."/>
        </authorList>
    </citation>
    <scope>NUCLEOTIDE SEQUENCE [LARGE SCALE GENOMIC DNA]</scope>
    <source>
        <strain>cv. SunUp</strain>
    </source>
</reference>
<organism>
    <name type="scientific">Carica papaya</name>
    <name type="common">Papaya</name>
    <dbReference type="NCBI Taxonomy" id="3649"/>
    <lineage>
        <taxon>Eukaryota</taxon>
        <taxon>Viridiplantae</taxon>
        <taxon>Streptophyta</taxon>
        <taxon>Embryophyta</taxon>
        <taxon>Tracheophyta</taxon>
        <taxon>Spermatophyta</taxon>
        <taxon>Magnoliopsida</taxon>
        <taxon>eudicotyledons</taxon>
        <taxon>Gunneridae</taxon>
        <taxon>Pentapetalae</taxon>
        <taxon>rosids</taxon>
        <taxon>malvids</taxon>
        <taxon>Brassicales</taxon>
        <taxon>Caricaceae</taxon>
        <taxon>Carica</taxon>
    </lineage>
</organism>
<protein>
    <recommendedName>
        <fullName evidence="2">Small ribosomal subunit protein uS15c</fullName>
    </recommendedName>
    <alternativeName>
        <fullName>30S ribosomal protein S15, chloroplastic</fullName>
    </alternativeName>
</protein>
<sequence length="92" mass="11133">MIKNSFISFQEKKKENSGSVEFQVFSFTNKIRRLTSHLELHRKDYLSQRGLRKILGKRQRLLSYLSKKNRVRYKELINQLDIRESKKISFLN</sequence>
<proteinExistence type="inferred from homology"/>